<comment type="function">
    <text evidence="1 2">Transcriptional regulator that controls a genetic switch in male development. It is necessary and sufficient for initiating male sex determination by directing the development of supporting cell precursors (pre-Sertoli cells) as Sertoli rather than granulosa cells. Involved in different aspects of gene regulation including promoter activation or repression. Binds to the DNA consensus sequence 5'-[AT]AACAA[AT]-3'. SRY HMG box recognizes DNA by partial intercalation in the minor groove and promotes DNA bending. Also involved in pre-mRNA splicing (By similarity). In male adult brain involved in the maintenance of motor functions of dopaminergic neurons (By similarity).</text>
</comment>
<comment type="subunit">
    <text evidence="2">Interacts with CALM, EP300, HDAC3, KPNB1, ZNF208 isoform KRAB-O, PARP1, SLC9A3R2 and WT1. The interaction with EP300 modulates its DNA-binding activity. The interaction with KPNB1 is sensitive to dissociation by Ran in the GTP-bound form. Interaction with PARP1 impaired its DNA-binding activity.</text>
</comment>
<comment type="subcellular location">
    <subcellularLocation>
        <location evidence="2">Nucleus speckle</location>
    </subcellularLocation>
    <subcellularLocation>
        <location evidence="2">Cytoplasm</location>
    </subcellularLocation>
    <subcellularLocation>
        <location evidence="2">Nucleus</location>
    </subcellularLocation>
</comment>
<comment type="similarity">
    <text evidence="5">Belongs to the SRY family.</text>
</comment>
<comment type="online information" name="Protein Spotlight">
    <link uri="https://www.proteinspotlight.org/back_issues/080"/>
    <text>The tenuous nature of sex - Issue 80 of March 2007</text>
</comment>
<gene>
    <name type="primary">SRY</name>
    <name type="synonym">TDF</name>
</gene>
<organism>
    <name type="scientific">Mesoplodon stejnegeri</name>
    <name type="common">Stejneger's beaked whale</name>
    <dbReference type="NCBI Taxonomy" id="52114"/>
    <lineage>
        <taxon>Eukaryota</taxon>
        <taxon>Metazoa</taxon>
        <taxon>Chordata</taxon>
        <taxon>Craniata</taxon>
        <taxon>Vertebrata</taxon>
        <taxon>Euteleostomi</taxon>
        <taxon>Mammalia</taxon>
        <taxon>Eutheria</taxon>
        <taxon>Laurasiatheria</taxon>
        <taxon>Artiodactyla</taxon>
        <taxon>Whippomorpha</taxon>
        <taxon>Cetacea</taxon>
        <taxon>Odontoceti</taxon>
        <taxon>Ziphiidae</taxon>
        <taxon>Mesoplodon</taxon>
    </lineage>
</organism>
<sequence length="216" mass="25224">MFRIVNGEDYSPAVQQRNIRDFGKAPSLLWTDNGSSNDRCETGGNGRESGQDRVKRPMNAFIVWSRDQRRKVALENPQMRNSEISKRLGYDWKMLTEAEKQPFFEEAQRLRAMHRDKYPGYKYRPRRKAKRPQKSLPADSSVRCSRMHIEETLYPFTYKDGCAKATRSRMESRLSHSQPTNISSSLLPQEHRSSWTSLRHNRVTQAMQTCGRPLLL</sequence>
<protein>
    <recommendedName>
        <fullName>Sex-determining region Y protein</fullName>
    </recommendedName>
    <alternativeName>
        <fullName>Testis-determining factor</fullName>
    </alternativeName>
</protein>
<proteinExistence type="inferred from homology"/>
<evidence type="ECO:0000250" key="1">
    <source>
        <dbReference type="UniProtKB" id="P36394"/>
    </source>
</evidence>
<evidence type="ECO:0000250" key="2">
    <source>
        <dbReference type="UniProtKB" id="Q05066"/>
    </source>
</evidence>
<evidence type="ECO:0000255" key="3">
    <source>
        <dbReference type="PROSITE-ProRule" id="PRU00267"/>
    </source>
</evidence>
<evidence type="ECO:0000256" key="4">
    <source>
        <dbReference type="SAM" id="MobiDB-lite"/>
    </source>
</evidence>
<evidence type="ECO:0000305" key="5"/>
<feature type="chain" id="PRO_0000048681" description="Sex-determining region Y protein">
    <location>
        <begin position="1"/>
        <end position="216"/>
    </location>
</feature>
<feature type="DNA-binding region" description="HMG box" evidence="3">
    <location>
        <begin position="54"/>
        <end position="122"/>
    </location>
</feature>
<feature type="region of interest" description="Disordered" evidence="4">
    <location>
        <begin position="25"/>
        <end position="54"/>
    </location>
</feature>
<feature type="region of interest" description="Disordered" evidence="4">
    <location>
        <begin position="169"/>
        <end position="188"/>
    </location>
</feature>
<feature type="compositionally biased region" description="Polar residues" evidence="4">
    <location>
        <begin position="175"/>
        <end position="187"/>
    </location>
</feature>
<dbReference type="EMBL" id="AB108517">
    <property type="protein sequence ID" value="BAC75649.1"/>
    <property type="molecule type" value="Genomic_DNA"/>
</dbReference>
<dbReference type="SMR" id="Q864Q4"/>
<dbReference type="GO" id="GO:0005737">
    <property type="term" value="C:cytoplasm"/>
    <property type="evidence" value="ECO:0007669"/>
    <property type="project" value="UniProtKB-SubCell"/>
</dbReference>
<dbReference type="GO" id="GO:0016607">
    <property type="term" value="C:nuclear speck"/>
    <property type="evidence" value="ECO:0007669"/>
    <property type="project" value="UniProtKB-SubCell"/>
</dbReference>
<dbReference type="GO" id="GO:0005634">
    <property type="term" value="C:nucleus"/>
    <property type="evidence" value="ECO:0000250"/>
    <property type="project" value="UniProtKB"/>
</dbReference>
<dbReference type="GO" id="GO:0005516">
    <property type="term" value="F:calmodulin binding"/>
    <property type="evidence" value="ECO:0007669"/>
    <property type="project" value="UniProtKB-KW"/>
</dbReference>
<dbReference type="GO" id="GO:0001228">
    <property type="term" value="F:DNA-binding transcription activator activity, RNA polymerase II-specific"/>
    <property type="evidence" value="ECO:0007669"/>
    <property type="project" value="TreeGrafter"/>
</dbReference>
<dbReference type="GO" id="GO:0000978">
    <property type="term" value="F:RNA polymerase II cis-regulatory region sequence-specific DNA binding"/>
    <property type="evidence" value="ECO:0007669"/>
    <property type="project" value="TreeGrafter"/>
</dbReference>
<dbReference type="GO" id="GO:0030154">
    <property type="term" value="P:cell differentiation"/>
    <property type="evidence" value="ECO:0007669"/>
    <property type="project" value="UniProtKB-KW"/>
</dbReference>
<dbReference type="GO" id="GO:0030238">
    <property type="term" value="P:male sex determination"/>
    <property type="evidence" value="ECO:0007669"/>
    <property type="project" value="InterPro"/>
</dbReference>
<dbReference type="GO" id="GO:0007548">
    <property type="term" value="P:sex differentiation"/>
    <property type="evidence" value="ECO:0007669"/>
    <property type="project" value="UniProtKB-KW"/>
</dbReference>
<dbReference type="CDD" id="cd22034">
    <property type="entry name" value="HMG-box_SoxA_SRY"/>
    <property type="match status" value="1"/>
</dbReference>
<dbReference type="FunFam" id="1.10.30.10:FF:000002">
    <property type="entry name" value="transcription factor Sox-2"/>
    <property type="match status" value="1"/>
</dbReference>
<dbReference type="Gene3D" id="1.10.30.10">
    <property type="entry name" value="High mobility group box domain"/>
    <property type="match status" value="1"/>
</dbReference>
<dbReference type="InterPro" id="IPR009071">
    <property type="entry name" value="HMG_box_dom"/>
</dbReference>
<dbReference type="InterPro" id="IPR036910">
    <property type="entry name" value="HMG_box_dom_sf"/>
</dbReference>
<dbReference type="InterPro" id="IPR017253">
    <property type="entry name" value="SRY"/>
</dbReference>
<dbReference type="InterPro" id="IPR050140">
    <property type="entry name" value="SRY-related_HMG-box_TF-like"/>
</dbReference>
<dbReference type="PANTHER" id="PTHR10270:SF161">
    <property type="entry name" value="SEX-DETERMINING REGION Y PROTEIN"/>
    <property type="match status" value="1"/>
</dbReference>
<dbReference type="PANTHER" id="PTHR10270">
    <property type="entry name" value="SOX TRANSCRIPTION FACTOR"/>
    <property type="match status" value="1"/>
</dbReference>
<dbReference type="Pfam" id="PF00505">
    <property type="entry name" value="HMG_box"/>
    <property type="match status" value="1"/>
</dbReference>
<dbReference type="PIRSF" id="PIRSF037653">
    <property type="entry name" value="SRY"/>
    <property type="match status" value="1"/>
</dbReference>
<dbReference type="SMART" id="SM00398">
    <property type="entry name" value="HMG"/>
    <property type="match status" value="1"/>
</dbReference>
<dbReference type="SUPFAM" id="SSF47095">
    <property type="entry name" value="HMG-box"/>
    <property type="match status" value="1"/>
</dbReference>
<dbReference type="PROSITE" id="PS50118">
    <property type="entry name" value="HMG_BOX_2"/>
    <property type="match status" value="1"/>
</dbReference>
<keyword id="KW-0010">Activator</keyword>
<keyword id="KW-0112">Calmodulin-binding</keyword>
<keyword id="KW-0963">Cytoplasm</keyword>
<keyword id="KW-0221">Differentiation</keyword>
<keyword id="KW-0238">DNA-binding</keyword>
<keyword id="KW-0539">Nucleus</keyword>
<keyword id="KW-0678">Repressor</keyword>
<keyword id="KW-0726">Sexual differentiation</keyword>
<keyword id="KW-0804">Transcription</keyword>
<keyword id="KW-0805">Transcription regulation</keyword>
<accession>Q864Q4</accession>
<name>SRY_MESST</name>
<reference key="1">
    <citation type="journal article" date="2003" name="Mammal Study">
        <title>SRY gene structure and phylogeny in the cetacean species.</title>
        <authorList>
            <person name="Nishida S."/>
            <person name="Pastene L.A."/>
            <person name="Goto M."/>
            <person name="Koike H."/>
        </authorList>
    </citation>
    <scope>NUCLEOTIDE SEQUENCE [GENOMIC DNA]</scope>
</reference>